<protein>
    <recommendedName>
        <fullName>DNA-directed DNA/RNA polymerase mu</fullName>
        <shortName>Pol Mu</shortName>
        <ecNumber>2.7.7.7</ecNumber>
    </recommendedName>
    <alternativeName>
        <fullName>Terminal transferase</fullName>
    </alternativeName>
</protein>
<reference key="1">
    <citation type="journal article" date="2000" name="EMBO J.">
        <title>DNA polymerase mu (Pol mu), homologous to TdT, could act as a DNA mutator in eukaryotic cells.</title>
        <authorList>
            <person name="Dominguez O."/>
            <person name="Ruiz J.F."/>
            <person name="Lain de Lera T."/>
            <person name="Garcia-Diaz M."/>
            <person name="Gonzalez M.A."/>
            <person name="Kirchhoff T."/>
            <person name="Martinez-A C."/>
            <person name="Bernad A."/>
            <person name="Blanco L."/>
        </authorList>
    </citation>
    <scope>NUCLEOTIDE SEQUENCE [MRNA] (ISOFORM 1)</scope>
    <source>
        <tissue>Placenta</tissue>
    </source>
</reference>
<reference key="2">
    <citation type="journal article" date="2000" name="Nucleic Acids Res.">
        <title>Two novel human and mouse DNA polymerases of the polX family.</title>
        <authorList>
            <person name="Aoufouchi S."/>
            <person name="Flatter E."/>
            <person name="Dahan A."/>
            <person name="Faili A."/>
            <person name="Bertocci B."/>
            <person name="Storck S."/>
            <person name="Delbos F."/>
            <person name="Cocea L."/>
            <person name="Gupta N."/>
            <person name="Weill J.-C."/>
            <person name="Reynaud C.-A."/>
        </authorList>
    </citation>
    <scope>NUCLEOTIDE SEQUENCE [MRNA] (ISOFORM 1)</scope>
</reference>
<reference key="3">
    <citation type="submission" date="2005-01" db="EMBL/GenBank/DDBJ databases">
        <authorList>
            <consortium name="NIEHS SNPs program"/>
        </authorList>
    </citation>
    <scope>NUCLEOTIDE SEQUENCE [GENOMIC DNA]</scope>
    <scope>VARIANTS ASP-107; ALA-220; PHE-246 AND PHE-484</scope>
</reference>
<reference key="4">
    <citation type="journal article" date="2003" name="Nature">
        <title>The DNA sequence of human chromosome 7.</title>
        <authorList>
            <person name="Hillier L.W."/>
            <person name="Fulton R.S."/>
            <person name="Fulton L.A."/>
            <person name="Graves T.A."/>
            <person name="Pepin K.H."/>
            <person name="Wagner-McPherson C."/>
            <person name="Layman D."/>
            <person name="Maas J."/>
            <person name="Jaeger S."/>
            <person name="Walker R."/>
            <person name="Wylie K."/>
            <person name="Sekhon M."/>
            <person name="Becker M.C."/>
            <person name="O'Laughlin M.D."/>
            <person name="Schaller M.E."/>
            <person name="Fewell G.A."/>
            <person name="Delehaunty K.D."/>
            <person name="Miner T.L."/>
            <person name="Nash W.E."/>
            <person name="Cordes M."/>
            <person name="Du H."/>
            <person name="Sun H."/>
            <person name="Edwards J."/>
            <person name="Bradshaw-Cordum H."/>
            <person name="Ali J."/>
            <person name="Andrews S."/>
            <person name="Isak A."/>
            <person name="Vanbrunt A."/>
            <person name="Nguyen C."/>
            <person name="Du F."/>
            <person name="Lamar B."/>
            <person name="Courtney L."/>
            <person name="Kalicki J."/>
            <person name="Ozersky P."/>
            <person name="Bielicki L."/>
            <person name="Scott K."/>
            <person name="Holmes A."/>
            <person name="Harkins R."/>
            <person name="Harris A."/>
            <person name="Strong C.M."/>
            <person name="Hou S."/>
            <person name="Tomlinson C."/>
            <person name="Dauphin-Kohlberg S."/>
            <person name="Kozlowicz-Reilly A."/>
            <person name="Leonard S."/>
            <person name="Rohlfing T."/>
            <person name="Rock S.M."/>
            <person name="Tin-Wollam A.-M."/>
            <person name="Abbott A."/>
            <person name="Minx P."/>
            <person name="Maupin R."/>
            <person name="Strowmatt C."/>
            <person name="Latreille P."/>
            <person name="Miller N."/>
            <person name="Johnson D."/>
            <person name="Murray J."/>
            <person name="Woessner J.P."/>
            <person name="Wendl M.C."/>
            <person name="Yang S.-P."/>
            <person name="Schultz B.R."/>
            <person name="Wallis J.W."/>
            <person name="Spieth J."/>
            <person name="Bieri T.A."/>
            <person name="Nelson J.O."/>
            <person name="Berkowicz N."/>
            <person name="Wohldmann P.E."/>
            <person name="Cook L.L."/>
            <person name="Hickenbotham M.T."/>
            <person name="Eldred J."/>
            <person name="Williams D."/>
            <person name="Bedell J.A."/>
            <person name="Mardis E.R."/>
            <person name="Clifton S.W."/>
            <person name="Chissoe S.L."/>
            <person name="Marra M.A."/>
            <person name="Raymond C."/>
            <person name="Haugen E."/>
            <person name="Gillett W."/>
            <person name="Zhou Y."/>
            <person name="James R."/>
            <person name="Phelps K."/>
            <person name="Iadanoto S."/>
            <person name="Bubb K."/>
            <person name="Simms E."/>
            <person name="Levy R."/>
            <person name="Clendenning J."/>
            <person name="Kaul R."/>
            <person name="Kent W.J."/>
            <person name="Furey T.S."/>
            <person name="Baertsch R.A."/>
            <person name="Brent M.R."/>
            <person name="Keibler E."/>
            <person name="Flicek P."/>
            <person name="Bork P."/>
            <person name="Suyama M."/>
            <person name="Bailey J.A."/>
            <person name="Portnoy M.E."/>
            <person name="Torrents D."/>
            <person name="Chinwalla A.T."/>
            <person name="Gish W.R."/>
            <person name="Eddy S.R."/>
            <person name="McPherson J.D."/>
            <person name="Olson M.V."/>
            <person name="Eichler E.E."/>
            <person name="Green E.D."/>
            <person name="Waterston R.H."/>
            <person name="Wilson R.K."/>
        </authorList>
    </citation>
    <scope>NUCLEOTIDE SEQUENCE [LARGE SCALE GENOMIC DNA]</scope>
</reference>
<reference key="5">
    <citation type="submission" date="2005-09" db="EMBL/GenBank/DDBJ databases">
        <authorList>
            <person name="Mural R.J."/>
            <person name="Istrail S."/>
            <person name="Sutton G.G."/>
            <person name="Florea L."/>
            <person name="Halpern A.L."/>
            <person name="Mobarry C.M."/>
            <person name="Lippert R."/>
            <person name="Walenz B."/>
            <person name="Shatkay H."/>
            <person name="Dew I."/>
            <person name="Miller J.R."/>
            <person name="Flanigan M.J."/>
            <person name="Edwards N.J."/>
            <person name="Bolanos R."/>
            <person name="Fasulo D."/>
            <person name="Halldorsson B.V."/>
            <person name="Hannenhalli S."/>
            <person name="Turner R."/>
            <person name="Yooseph S."/>
            <person name="Lu F."/>
            <person name="Nusskern D.R."/>
            <person name="Shue B.C."/>
            <person name="Zheng X.H."/>
            <person name="Zhong F."/>
            <person name="Delcher A.L."/>
            <person name="Huson D.H."/>
            <person name="Kravitz S.A."/>
            <person name="Mouchard L."/>
            <person name="Reinert K."/>
            <person name="Remington K.A."/>
            <person name="Clark A.G."/>
            <person name="Waterman M.S."/>
            <person name="Eichler E.E."/>
            <person name="Adams M.D."/>
            <person name="Hunkapiller M.W."/>
            <person name="Myers E.W."/>
            <person name="Venter J.C."/>
        </authorList>
    </citation>
    <scope>NUCLEOTIDE SEQUENCE [LARGE SCALE GENOMIC DNA]</scope>
</reference>
<reference key="6">
    <citation type="journal article" date="2004" name="Genome Res.">
        <title>The status, quality, and expansion of the NIH full-length cDNA project: the Mammalian Gene Collection (MGC).</title>
        <authorList>
            <consortium name="The MGC Project Team"/>
        </authorList>
    </citation>
    <scope>NUCLEOTIDE SEQUENCE [LARGE SCALE MRNA] (ISOFORMS 2 AND 3)</scope>
    <source>
        <tissue>Blood</tissue>
        <tissue>Brain</tissue>
    </source>
</reference>
<reference key="7">
    <citation type="journal article" date="2003" name="Mol. Cell. Biol.">
        <title>Polymerase mu is a DNA-directed DNA/RNA polymerase.</title>
        <authorList>
            <person name="Nick McElhinny S.A."/>
            <person name="Ramsden D.A."/>
        </authorList>
    </citation>
    <scope>FUNCTION</scope>
</reference>
<reference key="8">
    <citation type="journal article" date="2003" name="Nucleic Acids Res.">
        <title>Lack of sugar discrimination by human Pol mu requires a single glycine residue.</title>
        <authorList>
            <person name="Ruiz J.F."/>
            <person name="Juarez R."/>
            <person name="Garcia-Diaz M."/>
            <person name="Terrados G."/>
            <person name="Picher A.J."/>
            <person name="Gonzalez-Barrera S."/>
            <person name="Fernandez de Henestrosa A.R."/>
            <person name="Blanco L."/>
        </authorList>
    </citation>
    <scope>FUNCTION</scope>
    <scope>SUGAR DISCRIMINATION SITE</scope>
</reference>
<reference key="9">
    <citation type="journal article" date="2007" name="Nucleic Acids Res.">
        <title>Involvement of DNA polymerase mu in the repair of a specific subset of DNA double-strand breaks in mammalian cells.</title>
        <authorList>
            <person name="Capp J.P."/>
            <person name="Boudsocq F."/>
            <person name="Besnard A.G."/>
            <person name="Lopez B.S."/>
            <person name="Cazaux C."/>
            <person name="Hoffmann J.S."/>
            <person name="Canitrot Y."/>
        </authorList>
    </citation>
    <scope>FUNCTION</scope>
</reference>
<reference key="10">
    <citation type="journal article" date="2008" name="Proc. Natl. Acad. Sci. U.S.A.">
        <title>A quantitative atlas of mitotic phosphorylation.</title>
        <authorList>
            <person name="Dephoure N."/>
            <person name="Zhou C."/>
            <person name="Villen J."/>
            <person name="Beausoleil S.A."/>
            <person name="Bakalarski C.E."/>
            <person name="Elledge S.J."/>
            <person name="Gygi S.P."/>
        </authorList>
    </citation>
    <scope>PHOSPHORYLATION [LARGE SCALE ANALYSIS] AT SER-12</scope>
    <scope>IDENTIFICATION BY MASS SPECTROMETRY [LARGE SCALE ANALYSIS]</scope>
    <source>
        <tissue>Cervix carcinoma</tissue>
    </source>
</reference>
<reference key="11">
    <citation type="journal article" date="2009" name="Anal. Chem.">
        <title>Lys-N and trypsin cover complementary parts of the phosphoproteome in a refined SCX-based approach.</title>
        <authorList>
            <person name="Gauci S."/>
            <person name="Helbig A.O."/>
            <person name="Slijper M."/>
            <person name="Krijgsveld J."/>
            <person name="Heck A.J."/>
            <person name="Mohammed S."/>
        </authorList>
    </citation>
    <scope>IDENTIFICATION BY MASS SPECTROMETRY [LARGE SCALE ANALYSIS]</scope>
</reference>
<reference key="12">
    <citation type="journal article" date="2009" name="Sci. Signal.">
        <title>Quantitative phosphoproteomic analysis of T cell receptor signaling reveals system-wide modulation of protein-protein interactions.</title>
        <authorList>
            <person name="Mayya V."/>
            <person name="Lundgren D.H."/>
            <person name="Hwang S.-I."/>
            <person name="Rezaul K."/>
            <person name="Wu L."/>
            <person name="Eng J.K."/>
            <person name="Rodionov V."/>
            <person name="Han D.K."/>
        </authorList>
    </citation>
    <scope>PHOSPHORYLATION [LARGE SCALE ANALYSIS] AT SER-12</scope>
    <scope>IDENTIFICATION BY MASS SPECTROMETRY [LARGE SCALE ANALYSIS]</scope>
    <source>
        <tissue>Leukemic T-cell</tissue>
    </source>
</reference>
<reference key="13">
    <citation type="journal article" date="2013" name="J. Proteome Res.">
        <title>Toward a comprehensive characterization of a human cancer cell phosphoproteome.</title>
        <authorList>
            <person name="Zhou H."/>
            <person name="Di Palma S."/>
            <person name="Preisinger C."/>
            <person name="Peng M."/>
            <person name="Polat A.N."/>
            <person name="Heck A.J."/>
            <person name="Mohammed S."/>
        </authorList>
    </citation>
    <scope>PHOSPHORYLATION [LARGE SCALE ANALYSIS] AT SER-12</scope>
    <scope>IDENTIFICATION BY MASS SPECTROMETRY [LARGE SCALE ANALYSIS]</scope>
    <source>
        <tissue>Cervix carcinoma</tissue>
        <tissue>Erythroleukemia</tissue>
    </source>
</reference>
<reference key="14">
    <citation type="journal article" date="2014" name="J. Proteomics">
        <title>An enzyme assisted RP-RPLC approach for in-depth analysis of human liver phosphoproteome.</title>
        <authorList>
            <person name="Bian Y."/>
            <person name="Song C."/>
            <person name="Cheng K."/>
            <person name="Dong M."/>
            <person name="Wang F."/>
            <person name="Huang J."/>
            <person name="Sun D."/>
            <person name="Wang L."/>
            <person name="Ye M."/>
            <person name="Zou H."/>
        </authorList>
    </citation>
    <scope>PHOSPHORYLATION [LARGE SCALE ANALYSIS] AT SER-12</scope>
    <scope>IDENTIFICATION BY MASS SPECTROMETRY [LARGE SCALE ANALYSIS]</scope>
    <source>
        <tissue>Liver</tissue>
    </source>
</reference>
<reference key="15">
    <citation type="journal article" date="2007" name="Biochemistry">
        <title>Solution structure of polymerase mu's BRCT Domain reveals an element essential for its role in nonhomologous end joining.</title>
        <authorList>
            <person name="DeRose E.F."/>
            <person name="Clarkson M.W."/>
            <person name="Gilmore S.A."/>
            <person name="Galban C.J."/>
            <person name="Tripathy A."/>
            <person name="Havener J.M."/>
            <person name="Mueller G.A."/>
            <person name="Ramsden D.A."/>
            <person name="London R.E."/>
            <person name="Lee A.L."/>
        </authorList>
    </citation>
    <scope>STRUCTURE BY NMR OF 21-124</scope>
    <scope>FUNCTION</scope>
</reference>
<reference key="16">
    <citation type="submission" date="2007-01" db="PDB data bank">
        <title>Solution structure of BRCT domain of DNA polymerase mu.</title>
        <authorList>
            <consortium name="RIKEN structural genomics initiative (RSGI)"/>
        </authorList>
    </citation>
    <scope>STRUCTURE BY NMR OF 18-147</scope>
</reference>
<proteinExistence type="evidence at protein level"/>
<organism>
    <name type="scientific">Homo sapiens</name>
    <name type="common">Human</name>
    <dbReference type="NCBI Taxonomy" id="9606"/>
    <lineage>
        <taxon>Eukaryota</taxon>
        <taxon>Metazoa</taxon>
        <taxon>Chordata</taxon>
        <taxon>Craniata</taxon>
        <taxon>Vertebrata</taxon>
        <taxon>Euteleostomi</taxon>
        <taxon>Mammalia</taxon>
        <taxon>Eutheria</taxon>
        <taxon>Euarchontoglires</taxon>
        <taxon>Primates</taxon>
        <taxon>Haplorrhini</taxon>
        <taxon>Catarrhini</taxon>
        <taxon>Hominidae</taxon>
        <taxon>Homo</taxon>
    </lineage>
</organism>
<gene>
    <name type="primary">POLM</name>
    <name type="synonym">polmu</name>
</gene>
<keyword id="KW-0002">3D-structure</keyword>
<keyword id="KW-0025">Alternative splicing</keyword>
<keyword id="KW-0227">DNA damage</keyword>
<keyword id="KW-0233">DNA recombination</keyword>
<keyword id="KW-0234">DNA repair</keyword>
<keyword id="KW-0239">DNA-directed DNA polymerase</keyword>
<keyword id="KW-0460">Magnesium</keyword>
<keyword id="KW-0479">Metal-binding</keyword>
<keyword id="KW-0548">Nucleotidyltransferase</keyword>
<keyword id="KW-0539">Nucleus</keyword>
<keyword id="KW-0597">Phosphoprotein</keyword>
<keyword id="KW-1267">Proteomics identification</keyword>
<keyword id="KW-1185">Reference proteome</keyword>
<keyword id="KW-0808">Transferase</keyword>
<evidence type="ECO:0000250" key="1"/>
<evidence type="ECO:0000255" key="2">
    <source>
        <dbReference type="PROSITE-ProRule" id="PRU00033"/>
    </source>
</evidence>
<evidence type="ECO:0000256" key="3">
    <source>
        <dbReference type="SAM" id="MobiDB-lite"/>
    </source>
</evidence>
<evidence type="ECO:0000269" key="4">
    <source>
    </source>
</evidence>
<evidence type="ECO:0000269" key="5">
    <source>
    </source>
</evidence>
<evidence type="ECO:0000269" key="6">
    <source>
    </source>
</evidence>
<evidence type="ECO:0000269" key="7">
    <source>
    </source>
</evidence>
<evidence type="ECO:0000269" key="8">
    <source ref="3"/>
</evidence>
<evidence type="ECO:0000303" key="9">
    <source>
    </source>
</evidence>
<evidence type="ECO:0000305" key="10"/>
<evidence type="ECO:0007744" key="11">
    <source>
    </source>
</evidence>
<evidence type="ECO:0007744" key="12">
    <source>
    </source>
</evidence>
<evidence type="ECO:0007744" key="13">
    <source>
    </source>
</evidence>
<evidence type="ECO:0007744" key="14">
    <source>
    </source>
</evidence>
<evidence type="ECO:0007829" key="15">
    <source>
        <dbReference type="PDB" id="2DUN"/>
    </source>
</evidence>
<evidence type="ECO:0007829" key="16">
    <source>
        <dbReference type="PDB" id="6VF1"/>
    </source>
</evidence>
<evidence type="ECO:0007829" key="17">
    <source>
        <dbReference type="PDB" id="7KT0"/>
    </source>
</evidence>
<evidence type="ECO:0007829" key="18">
    <source>
        <dbReference type="PDB" id="7KTN"/>
    </source>
</evidence>
<dbReference type="EC" id="2.7.7.7"/>
<dbReference type="EMBL" id="AJ131891">
    <property type="protein sequence ID" value="CAB65075.2"/>
    <property type="molecule type" value="mRNA"/>
</dbReference>
<dbReference type="EMBL" id="AF176097">
    <property type="protein sequence ID" value="AAF26284.1"/>
    <property type="molecule type" value="mRNA"/>
</dbReference>
<dbReference type="EMBL" id="AY899911">
    <property type="protein sequence ID" value="AAW65376.1"/>
    <property type="molecule type" value="Genomic_DNA"/>
</dbReference>
<dbReference type="EMBL" id="AC017116">
    <property type="status" value="NOT_ANNOTATED_CDS"/>
    <property type="molecule type" value="Genomic_DNA"/>
</dbReference>
<dbReference type="EMBL" id="CH471128">
    <property type="protein sequence ID" value="EAW61122.1"/>
    <property type="molecule type" value="Genomic_DNA"/>
</dbReference>
<dbReference type="EMBL" id="CH471128">
    <property type="protein sequence ID" value="EAW61123.1"/>
    <property type="molecule type" value="Genomic_DNA"/>
</dbReference>
<dbReference type="EMBL" id="CH471128">
    <property type="protein sequence ID" value="EAW61124.1"/>
    <property type="molecule type" value="Genomic_DNA"/>
</dbReference>
<dbReference type="EMBL" id="CH471128">
    <property type="protein sequence ID" value="EAW61126.1"/>
    <property type="molecule type" value="Genomic_DNA"/>
</dbReference>
<dbReference type="EMBL" id="BC049202">
    <property type="protein sequence ID" value="AAH49202.2"/>
    <property type="molecule type" value="mRNA"/>
</dbReference>
<dbReference type="EMBL" id="BC062590">
    <property type="protein sequence ID" value="AAH62590.1"/>
    <property type="molecule type" value="mRNA"/>
</dbReference>
<dbReference type="CCDS" id="CCDS34625.1">
    <molecule id="Q9NP87-1"/>
</dbReference>
<dbReference type="CCDS" id="CCDS64635.1">
    <molecule id="Q9NP87-2"/>
</dbReference>
<dbReference type="CCDS" id="CCDS64636.1">
    <molecule id="Q9NP87-3"/>
</dbReference>
<dbReference type="RefSeq" id="NP_001271259.1">
    <molecule id="Q9NP87-3"/>
    <property type="nucleotide sequence ID" value="NM_001284330.2"/>
</dbReference>
<dbReference type="RefSeq" id="NP_001271260.1">
    <molecule id="Q9NP87-2"/>
    <property type="nucleotide sequence ID" value="NM_001284331.2"/>
</dbReference>
<dbReference type="RefSeq" id="NP_037416.1">
    <molecule id="Q9NP87-1"/>
    <property type="nucleotide sequence ID" value="NM_013284.4"/>
</dbReference>
<dbReference type="PDB" id="2DUN">
    <property type="method" value="NMR"/>
    <property type="chains" value="A=24-143"/>
</dbReference>
<dbReference type="PDB" id="2HTF">
    <property type="method" value="NMR"/>
    <property type="chains" value="A=21-124"/>
</dbReference>
<dbReference type="PDB" id="4LZD">
    <property type="method" value="X-ray"/>
    <property type="resolution" value="1.85 A"/>
    <property type="chains" value="A=132-397, A=411-494"/>
</dbReference>
<dbReference type="PDB" id="4LZG">
    <property type="method" value="X-ray"/>
    <property type="resolution" value="1.60 A"/>
    <property type="chains" value="A=132-397, A=411-494"/>
</dbReference>
<dbReference type="PDB" id="4M04">
    <property type="method" value="X-ray"/>
    <property type="resolution" value="1.90 A"/>
    <property type="chains" value="A=132-397, A=411-494"/>
</dbReference>
<dbReference type="PDB" id="4M0A">
    <property type="method" value="X-ray"/>
    <property type="resolution" value="1.85 A"/>
    <property type="chains" value="A=132-397, A=411-494"/>
</dbReference>
<dbReference type="PDB" id="4YCX">
    <property type="method" value="X-ray"/>
    <property type="resolution" value="2.10 A"/>
    <property type="chains" value="A=134-494"/>
</dbReference>
<dbReference type="PDB" id="4YD1">
    <property type="method" value="X-ray"/>
    <property type="resolution" value="1.75 A"/>
    <property type="chains" value="A=134-494"/>
</dbReference>
<dbReference type="PDB" id="4YD2">
    <property type="method" value="X-ray"/>
    <property type="resolution" value="2.47 A"/>
    <property type="chains" value="A=134-397, A=411-494"/>
</dbReference>
<dbReference type="PDB" id="5TWP">
    <property type="method" value="X-ray"/>
    <property type="resolution" value="2.00 A"/>
    <property type="chains" value="A=134-397, A=411-494"/>
</dbReference>
<dbReference type="PDB" id="5TWQ">
    <property type="method" value="X-ray"/>
    <property type="resolution" value="1.80 A"/>
    <property type="chains" value="A=134-397, A=411-494"/>
</dbReference>
<dbReference type="PDB" id="5TWR">
    <property type="method" value="X-ray"/>
    <property type="resolution" value="1.90 A"/>
    <property type="chains" value="A=134-397, A=411-494"/>
</dbReference>
<dbReference type="PDB" id="5TWS">
    <property type="method" value="X-ray"/>
    <property type="resolution" value="1.85 A"/>
    <property type="chains" value="A=134-397, A=411-494"/>
</dbReference>
<dbReference type="PDB" id="5TXX">
    <property type="method" value="X-ray"/>
    <property type="resolution" value="1.95 A"/>
    <property type="chains" value="A=132-494"/>
</dbReference>
<dbReference type="PDB" id="5TXZ">
    <property type="method" value="X-ray"/>
    <property type="resolution" value="1.65 A"/>
    <property type="chains" value="A=132-494"/>
</dbReference>
<dbReference type="PDB" id="5TYB">
    <property type="method" value="X-ray"/>
    <property type="resolution" value="1.85 A"/>
    <property type="chains" value="A=132-494"/>
</dbReference>
<dbReference type="PDB" id="5TYC">
    <property type="method" value="X-ray"/>
    <property type="resolution" value="2.10 A"/>
    <property type="chains" value="A=132-494"/>
</dbReference>
<dbReference type="PDB" id="5TYD">
    <property type="method" value="X-ray"/>
    <property type="resolution" value="1.90 A"/>
    <property type="chains" value="A=132-494"/>
</dbReference>
<dbReference type="PDB" id="5TYE">
    <property type="method" value="X-ray"/>
    <property type="resolution" value="2.05 A"/>
    <property type="chains" value="A=132-494"/>
</dbReference>
<dbReference type="PDB" id="5TYF">
    <property type="method" value="X-ray"/>
    <property type="resolution" value="1.97 A"/>
    <property type="chains" value="A=132-494"/>
</dbReference>
<dbReference type="PDB" id="5TYG">
    <property type="method" value="X-ray"/>
    <property type="resolution" value="1.73 A"/>
    <property type="chains" value="A=132-494"/>
</dbReference>
<dbReference type="PDB" id="5TYU">
    <property type="method" value="X-ray"/>
    <property type="resolution" value="2.05 A"/>
    <property type="chains" value="A=132-494"/>
</dbReference>
<dbReference type="PDB" id="5TYV">
    <property type="method" value="X-ray"/>
    <property type="resolution" value="1.93 A"/>
    <property type="chains" value="A=132-494"/>
</dbReference>
<dbReference type="PDB" id="5TYW">
    <property type="method" value="X-ray"/>
    <property type="resolution" value="1.88 A"/>
    <property type="chains" value="A=132-494"/>
</dbReference>
<dbReference type="PDB" id="5TYX">
    <property type="method" value="X-ray"/>
    <property type="resolution" value="1.95 A"/>
    <property type="chains" value="A=132-494"/>
</dbReference>
<dbReference type="PDB" id="5TYY">
    <property type="method" value="X-ray"/>
    <property type="resolution" value="1.93 A"/>
    <property type="chains" value="A=132-494"/>
</dbReference>
<dbReference type="PDB" id="5TYZ">
    <property type="method" value="X-ray"/>
    <property type="resolution" value="1.98 A"/>
    <property type="chains" value="A=132-494"/>
</dbReference>
<dbReference type="PDB" id="5VZ7">
    <property type="method" value="X-ray"/>
    <property type="resolution" value="1.55 A"/>
    <property type="chains" value="A=134-397, A=411-494"/>
</dbReference>
<dbReference type="PDB" id="5VZ8">
    <property type="method" value="X-ray"/>
    <property type="resolution" value="1.60 A"/>
    <property type="chains" value="A=134-397, A=411-494"/>
</dbReference>
<dbReference type="PDB" id="5VZ9">
    <property type="method" value="X-ray"/>
    <property type="resolution" value="1.65 A"/>
    <property type="chains" value="A=134-397, A=411-494"/>
</dbReference>
<dbReference type="PDB" id="5VZA">
    <property type="method" value="X-ray"/>
    <property type="resolution" value="1.50 A"/>
    <property type="chains" value="A=134-397, A=411-494"/>
</dbReference>
<dbReference type="PDB" id="5VZB">
    <property type="method" value="X-ray"/>
    <property type="resolution" value="1.50 A"/>
    <property type="chains" value="A=134-397, A=411-494"/>
</dbReference>
<dbReference type="PDB" id="5VZC">
    <property type="method" value="X-ray"/>
    <property type="resolution" value="1.55 A"/>
    <property type="chains" value="A=134-397, A=411-494"/>
</dbReference>
<dbReference type="PDB" id="5VZD">
    <property type="method" value="X-ray"/>
    <property type="resolution" value="1.60 A"/>
    <property type="chains" value="A=134-397, A=411-494"/>
</dbReference>
<dbReference type="PDB" id="5VZE">
    <property type="method" value="X-ray"/>
    <property type="resolution" value="1.51 A"/>
    <property type="chains" value="A=134-397, A=411-494"/>
</dbReference>
<dbReference type="PDB" id="5VZF">
    <property type="method" value="X-ray"/>
    <property type="resolution" value="1.65 A"/>
    <property type="chains" value="A=134-397, A=411-494"/>
</dbReference>
<dbReference type="PDB" id="5VZG">
    <property type="method" value="X-ray"/>
    <property type="resolution" value="1.85 A"/>
    <property type="chains" value="A=134-397, A=411-494"/>
</dbReference>
<dbReference type="PDB" id="5VZH">
    <property type="method" value="X-ray"/>
    <property type="resolution" value="1.95 A"/>
    <property type="chains" value="A=134-397, A=411-494"/>
</dbReference>
<dbReference type="PDB" id="5VZI">
    <property type="method" value="X-ray"/>
    <property type="resolution" value="1.50 A"/>
    <property type="chains" value="A=134-397, A=411-494"/>
</dbReference>
<dbReference type="PDB" id="5W4F">
    <property type="method" value="X-ray"/>
    <property type="resolution" value="1.98 A"/>
    <property type="chains" value="A/D=2-30"/>
</dbReference>
<dbReference type="PDB" id="5ZLC">
    <property type="method" value="X-ray"/>
    <property type="resolution" value="2.00 A"/>
    <property type="chains" value="A=132-397, A=411-494"/>
</dbReference>
<dbReference type="PDB" id="6AEC">
    <property type="method" value="X-ray"/>
    <property type="resolution" value="1.72 A"/>
    <property type="chains" value="A=132-397, A=411-494"/>
</dbReference>
<dbReference type="PDB" id="6AEH">
    <property type="method" value="X-ray"/>
    <property type="resolution" value="1.64 A"/>
    <property type="chains" value="A=132-397, A=411-494"/>
</dbReference>
<dbReference type="PDB" id="6AK5">
    <property type="method" value="X-ray"/>
    <property type="resolution" value="1.70 A"/>
    <property type="chains" value="A=132-397, A=411-494"/>
</dbReference>
<dbReference type="PDB" id="6AK6">
    <property type="method" value="X-ray"/>
    <property type="resolution" value="1.75 A"/>
    <property type="chains" value="A=132-397, A=411-494"/>
</dbReference>
<dbReference type="PDB" id="6AK8">
    <property type="method" value="X-ray"/>
    <property type="resolution" value="1.74 A"/>
    <property type="chains" value="A=132-397, A=411-494"/>
</dbReference>
<dbReference type="PDB" id="6AK9">
    <property type="method" value="X-ray"/>
    <property type="resolution" value="1.91 A"/>
    <property type="chains" value="A=132-397, A=411-494"/>
</dbReference>
<dbReference type="PDB" id="6AKH">
    <property type="method" value="X-ray"/>
    <property type="resolution" value="1.75 A"/>
    <property type="chains" value="A=132-397, A=411-494"/>
</dbReference>
<dbReference type="PDB" id="6IPD">
    <property type="method" value="X-ray"/>
    <property type="resolution" value="1.70 A"/>
    <property type="chains" value="A=132-397, A=411-494"/>
</dbReference>
<dbReference type="PDB" id="6IPE">
    <property type="method" value="X-ray"/>
    <property type="resolution" value="1.70 A"/>
    <property type="chains" value="A=132-397, A=411-494"/>
</dbReference>
<dbReference type="PDB" id="6IPF">
    <property type="method" value="X-ray"/>
    <property type="resolution" value="1.77 A"/>
    <property type="chains" value="A=132-397, A=411-494"/>
</dbReference>
<dbReference type="PDB" id="6IPG">
    <property type="method" value="X-ray"/>
    <property type="resolution" value="1.62 A"/>
    <property type="chains" value="A=132-397, A=411-494"/>
</dbReference>
<dbReference type="PDB" id="6IPH">
    <property type="method" value="X-ray"/>
    <property type="resolution" value="1.65 A"/>
    <property type="chains" value="A=132-397, A=411-494"/>
</dbReference>
<dbReference type="PDB" id="6IPI">
    <property type="method" value="X-ray"/>
    <property type="resolution" value="1.80 A"/>
    <property type="chains" value="A=132-397, A=411-494"/>
</dbReference>
<dbReference type="PDB" id="6IPJ">
    <property type="method" value="X-ray"/>
    <property type="resolution" value="1.98 A"/>
    <property type="chains" value="A=132-397, A=411-494"/>
</dbReference>
<dbReference type="PDB" id="6IPK">
    <property type="method" value="X-ray"/>
    <property type="resolution" value="2.15 A"/>
    <property type="chains" value="A=132-397, A=411-494"/>
</dbReference>
<dbReference type="PDB" id="6IPL">
    <property type="method" value="X-ray"/>
    <property type="resolution" value="1.64 A"/>
    <property type="chains" value="A=132-397, A=411-494"/>
</dbReference>
<dbReference type="PDB" id="6IPM">
    <property type="method" value="X-ray"/>
    <property type="resolution" value="1.72 A"/>
    <property type="chains" value="A=132-397, A=411-494"/>
</dbReference>
<dbReference type="PDB" id="6IPN">
    <property type="method" value="X-ray"/>
    <property type="resolution" value="1.60 A"/>
    <property type="chains" value="A=132-397, A=411-494"/>
</dbReference>
<dbReference type="PDB" id="6P1M">
    <property type="method" value="X-ray"/>
    <property type="resolution" value="1.65 A"/>
    <property type="chains" value="A=134-397, A=411-494"/>
</dbReference>
<dbReference type="PDB" id="6P1N">
    <property type="method" value="X-ray"/>
    <property type="resolution" value="1.60 A"/>
    <property type="chains" value="A=134-397, A=411-494"/>
</dbReference>
<dbReference type="PDB" id="6P1O">
    <property type="method" value="X-ray"/>
    <property type="resolution" value="1.65 A"/>
    <property type="chains" value="A=134-397, A=411-494"/>
</dbReference>
<dbReference type="PDB" id="6P1P">
    <property type="method" value="X-ray"/>
    <property type="resolution" value="1.75 A"/>
    <property type="chains" value="A=134-397, A=411-494"/>
</dbReference>
<dbReference type="PDB" id="6P1Q">
    <property type="method" value="X-ray"/>
    <property type="resolution" value="1.90 A"/>
    <property type="chains" value="A=134-397, A=411-494"/>
</dbReference>
<dbReference type="PDB" id="6P1R">
    <property type="method" value="X-ray"/>
    <property type="resolution" value="1.70 A"/>
    <property type="chains" value="A=134-397, A=411-494"/>
</dbReference>
<dbReference type="PDB" id="6P1S">
    <property type="method" value="X-ray"/>
    <property type="resolution" value="1.75 A"/>
    <property type="chains" value="A=134-397, A=411-494"/>
</dbReference>
<dbReference type="PDB" id="6P1T">
    <property type="method" value="X-ray"/>
    <property type="resolution" value="1.70 A"/>
    <property type="chains" value="A=134-397, A=411-494"/>
</dbReference>
<dbReference type="PDB" id="6P1U">
    <property type="method" value="X-ray"/>
    <property type="resolution" value="1.75 A"/>
    <property type="chains" value="A=134-397, A=411-494"/>
</dbReference>
<dbReference type="PDB" id="6P1V">
    <property type="method" value="X-ray"/>
    <property type="resolution" value="1.95 A"/>
    <property type="chains" value="A=134-397, A=411-494"/>
</dbReference>
<dbReference type="PDB" id="6P1W">
    <property type="method" value="X-ray"/>
    <property type="resolution" value="1.75 A"/>
    <property type="chains" value="A=134-397, A=411-494"/>
</dbReference>
<dbReference type="PDB" id="6VEZ">
    <property type="method" value="X-ray"/>
    <property type="resolution" value="1.88 A"/>
    <property type="chains" value="A=132-494"/>
</dbReference>
<dbReference type="PDB" id="6VF0">
    <property type="method" value="X-ray"/>
    <property type="resolution" value="1.58 A"/>
    <property type="chains" value="A=132-494"/>
</dbReference>
<dbReference type="PDB" id="6VF1">
    <property type="method" value="X-ray"/>
    <property type="resolution" value="1.68 A"/>
    <property type="chains" value="A=132-494"/>
</dbReference>
<dbReference type="PDB" id="6VF2">
    <property type="method" value="X-ray"/>
    <property type="resolution" value="1.60 A"/>
    <property type="chains" value="A=132-494"/>
</dbReference>
<dbReference type="PDB" id="6VF3">
    <property type="method" value="X-ray"/>
    <property type="resolution" value="1.52 A"/>
    <property type="chains" value="A=132-494"/>
</dbReference>
<dbReference type="PDB" id="6VF4">
    <property type="method" value="X-ray"/>
    <property type="resolution" value="1.75 A"/>
    <property type="chains" value="A=132-494"/>
</dbReference>
<dbReference type="PDB" id="6VF5">
    <property type="method" value="X-ray"/>
    <property type="resolution" value="1.60 A"/>
    <property type="chains" value="A=132-494"/>
</dbReference>
<dbReference type="PDB" id="6VF6">
    <property type="method" value="X-ray"/>
    <property type="resolution" value="1.69 A"/>
    <property type="chains" value="A=132-494"/>
</dbReference>
<dbReference type="PDB" id="6VF7">
    <property type="method" value="X-ray"/>
    <property type="resolution" value="1.87 A"/>
    <property type="chains" value="A=132-494"/>
</dbReference>
<dbReference type="PDB" id="6VF8">
    <property type="method" value="X-ray"/>
    <property type="resolution" value="1.70 A"/>
    <property type="chains" value="A=132-494"/>
</dbReference>
<dbReference type="PDB" id="6VF9">
    <property type="method" value="X-ray"/>
    <property type="resolution" value="1.56 A"/>
    <property type="chains" value="A=132-494"/>
</dbReference>
<dbReference type="PDB" id="6VFA">
    <property type="method" value="X-ray"/>
    <property type="resolution" value="1.76 A"/>
    <property type="chains" value="A=132-494"/>
</dbReference>
<dbReference type="PDB" id="6VFB">
    <property type="method" value="X-ray"/>
    <property type="resolution" value="1.55 A"/>
    <property type="chains" value="A=132-494"/>
</dbReference>
<dbReference type="PDB" id="6VFC">
    <property type="method" value="X-ray"/>
    <property type="resolution" value="1.59 A"/>
    <property type="chains" value="A=132-494"/>
</dbReference>
<dbReference type="PDB" id="6WIC">
    <property type="method" value="X-ray"/>
    <property type="resolution" value="1.55 A"/>
    <property type="chains" value="A=132-397, A=411-494"/>
</dbReference>
<dbReference type="PDB" id="6WID">
    <property type="method" value="X-ray"/>
    <property type="resolution" value="1.50 A"/>
    <property type="chains" value="A=132-397, A=411-494"/>
</dbReference>
<dbReference type="PDB" id="6WIE">
    <property type="method" value="X-ray"/>
    <property type="resolution" value="1.50 A"/>
    <property type="chains" value="A=132-397, A=411-494"/>
</dbReference>
<dbReference type="PDB" id="7CO6">
    <property type="method" value="X-ray"/>
    <property type="resolution" value="1.90 A"/>
    <property type="chains" value="A=1-494"/>
</dbReference>
<dbReference type="PDB" id="7CO8">
    <property type="method" value="X-ray"/>
    <property type="resolution" value="1.70 A"/>
    <property type="chains" value="A=1-494"/>
</dbReference>
<dbReference type="PDB" id="7CO9">
    <property type="method" value="X-ray"/>
    <property type="resolution" value="1.60 A"/>
    <property type="chains" value="A=1-494"/>
</dbReference>
<dbReference type="PDB" id="7COA">
    <property type="method" value="X-ray"/>
    <property type="resolution" value="1.70 A"/>
    <property type="chains" value="A=1-494"/>
</dbReference>
<dbReference type="PDB" id="7COB">
    <property type="method" value="X-ray"/>
    <property type="resolution" value="1.80 A"/>
    <property type="chains" value="A=1-494"/>
</dbReference>
<dbReference type="PDB" id="7COC">
    <property type="method" value="X-ray"/>
    <property type="resolution" value="1.90 A"/>
    <property type="chains" value="A=1-494"/>
</dbReference>
<dbReference type="PDB" id="7COD">
    <property type="method" value="X-ray"/>
    <property type="resolution" value="1.80 A"/>
    <property type="chains" value="A=1-494"/>
</dbReference>
<dbReference type="PDB" id="7KSS">
    <property type="method" value="X-ray"/>
    <property type="resolution" value="1.50 A"/>
    <property type="chains" value="A=132-494"/>
</dbReference>
<dbReference type="PDB" id="7KST">
    <property type="method" value="X-ray"/>
    <property type="resolution" value="1.60 A"/>
    <property type="chains" value="A=132-494"/>
</dbReference>
<dbReference type="PDB" id="7KSU">
    <property type="method" value="X-ray"/>
    <property type="resolution" value="1.65 A"/>
    <property type="chains" value="A=127-494"/>
</dbReference>
<dbReference type="PDB" id="7KSV">
    <property type="method" value="X-ray"/>
    <property type="resolution" value="1.64 A"/>
    <property type="chains" value="A=132-494"/>
</dbReference>
<dbReference type="PDB" id="7KSW">
    <property type="method" value="X-ray"/>
    <property type="resolution" value="1.49 A"/>
    <property type="chains" value="A=132-494"/>
</dbReference>
<dbReference type="PDB" id="7KSX">
    <property type="method" value="X-ray"/>
    <property type="resolution" value="1.57 A"/>
    <property type="chains" value="A=132-494"/>
</dbReference>
<dbReference type="PDB" id="7KSY">
    <property type="method" value="X-ray"/>
    <property type="resolution" value="1.58 A"/>
    <property type="chains" value="A=132-494"/>
</dbReference>
<dbReference type="PDB" id="7KSZ">
    <property type="method" value="X-ray"/>
    <property type="resolution" value="1.42 A"/>
    <property type="chains" value="A=127-494"/>
</dbReference>
<dbReference type="PDB" id="7KT0">
    <property type="method" value="X-ray"/>
    <property type="resolution" value="1.36 A"/>
    <property type="chains" value="A=127-494"/>
</dbReference>
<dbReference type="PDB" id="7KT1">
    <property type="method" value="X-ray"/>
    <property type="resolution" value="1.67 A"/>
    <property type="chains" value="A=127-494"/>
</dbReference>
<dbReference type="PDB" id="7KT2">
    <property type="method" value="X-ray"/>
    <property type="resolution" value="1.50 A"/>
    <property type="chains" value="A=127-494"/>
</dbReference>
<dbReference type="PDB" id="7KT3">
    <property type="method" value="X-ray"/>
    <property type="resolution" value="1.88 A"/>
    <property type="chains" value="A=132-397, A=411-494"/>
</dbReference>
<dbReference type="PDB" id="7KT4">
    <property type="method" value="X-ray"/>
    <property type="resolution" value="1.92 A"/>
    <property type="chains" value="A=132-397, A=411-494"/>
</dbReference>
<dbReference type="PDB" id="7KT5">
    <property type="method" value="X-ray"/>
    <property type="resolution" value="1.46 A"/>
    <property type="chains" value="A=132-397, A=411-494"/>
</dbReference>
<dbReference type="PDB" id="7KT6">
    <property type="method" value="X-ray"/>
    <property type="resolution" value="1.87 A"/>
    <property type="chains" value="A=132-397, A=411-494"/>
</dbReference>
<dbReference type="PDB" id="7KT7">
    <property type="method" value="X-ray"/>
    <property type="resolution" value="1.76 A"/>
    <property type="chains" value="A=132-397, A=411-494"/>
</dbReference>
<dbReference type="PDB" id="7KT8">
    <property type="method" value="X-ray"/>
    <property type="resolution" value="1.70 A"/>
    <property type="chains" value="A=132-397, A=411-494"/>
</dbReference>
<dbReference type="PDB" id="7KT9">
    <property type="method" value="X-ray"/>
    <property type="resolution" value="1.48 A"/>
    <property type="chains" value="A=132-397, A=411-494"/>
</dbReference>
<dbReference type="PDB" id="7KTA">
    <property type="method" value="X-ray"/>
    <property type="resolution" value="1.84 A"/>
    <property type="chains" value="A=132-397, A=411-494"/>
</dbReference>
<dbReference type="PDB" id="7KTB">
    <property type="method" value="X-ray"/>
    <property type="resolution" value="1.58 A"/>
    <property type="chains" value="A=132-494"/>
</dbReference>
<dbReference type="PDB" id="7KTC">
    <property type="method" value="X-ray"/>
    <property type="resolution" value="1.65 A"/>
    <property type="chains" value="A=132-494"/>
</dbReference>
<dbReference type="PDB" id="7KTD">
    <property type="method" value="X-ray"/>
    <property type="resolution" value="1.55 A"/>
    <property type="chains" value="A=132-494"/>
</dbReference>
<dbReference type="PDB" id="7KTE">
    <property type="method" value="X-ray"/>
    <property type="resolution" value="1.48 A"/>
    <property type="chains" value="A=132-397, A=411-494"/>
</dbReference>
<dbReference type="PDB" id="7KTF">
    <property type="method" value="X-ray"/>
    <property type="resolution" value="1.49 A"/>
    <property type="chains" value="A=132-397, A=411-494"/>
</dbReference>
<dbReference type="PDB" id="7KTG">
    <property type="method" value="X-ray"/>
    <property type="resolution" value="1.45 A"/>
    <property type="chains" value="A=132-397, A=411-494"/>
</dbReference>
<dbReference type="PDB" id="7KTH">
    <property type="method" value="X-ray"/>
    <property type="resolution" value="1.48 A"/>
    <property type="chains" value="A=132-494"/>
</dbReference>
<dbReference type="PDB" id="7KTI">
    <property type="method" value="X-ray"/>
    <property type="resolution" value="1.57 A"/>
    <property type="chains" value="A=132-494"/>
</dbReference>
<dbReference type="PDB" id="7KTJ">
    <property type="method" value="X-ray"/>
    <property type="resolution" value="1.45 A"/>
    <property type="chains" value="A=132-494"/>
</dbReference>
<dbReference type="PDB" id="7KTK">
    <property type="method" value="X-ray"/>
    <property type="resolution" value="1.42 A"/>
    <property type="chains" value="A=132-494"/>
</dbReference>
<dbReference type="PDB" id="7KTL">
    <property type="method" value="X-ray"/>
    <property type="resolution" value="1.42 A"/>
    <property type="chains" value="A=132-494"/>
</dbReference>
<dbReference type="PDB" id="7KTM">
    <property type="method" value="X-ray"/>
    <property type="resolution" value="1.53 A"/>
    <property type="chains" value="A=132-494"/>
</dbReference>
<dbReference type="PDB" id="7KTN">
    <property type="method" value="X-ray"/>
    <property type="resolution" value="1.33 A"/>
    <property type="chains" value="A=132-397, A=411-494"/>
</dbReference>
<dbReference type="PDBsum" id="2DUN"/>
<dbReference type="PDBsum" id="2HTF"/>
<dbReference type="PDBsum" id="4LZD"/>
<dbReference type="PDBsum" id="4LZG"/>
<dbReference type="PDBsum" id="4M04"/>
<dbReference type="PDBsum" id="4M0A"/>
<dbReference type="PDBsum" id="4YCX"/>
<dbReference type="PDBsum" id="4YD1"/>
<dbReference type="PDBsum" id="4YD2"/>
<dbReference type="PDBsum" id="5TWP"/>
<dbReference type="PDBsum" id="5TWQ"/>
<dbReference type="PDBsum" id="5TWR"/>
<dbReference type="PDBsum" id="5TWS"/>
<dbReference type="PDBsum" id="5TXX"/>
<dbReference type="PDBsum" id="5TXZ"/>
<dbReference type="PDBsum" id="5TYB"/>
<dbReference type="PDBsum" id="5TYC"/>
<dbReference type="PDBsum" id="5TYD"/>
<dbReference type="PDBsum" id="5TYE"/>
<dbReference type="PDBsum" id="5TYF"/>
<dbReference type="PDBsum" id="5TYG"/>
<dbReference type="PDBsum" id="5TYU"/>
<dbReference type="PDBsum" id="5TYV"/>
<dbReference type="PDBsum" id="5TYW"/>
<dbReference type="PDBsum" id="5TYX"/>
<dbReference type="PDBsum" id="5TYY"/>
<dbReference type="PDBsum" id="5TYZ"/>
<dbReference type="PDBsum" id="5VZ7"/>
<dbReference type="PDBsum" id="5VZ8"/>
<dbReference type="PDBsum" id="5VZ9"/>
<dbReference type="PDBsum" id="5VZA"/>
<dbReference type="PDBsum" id="5VZB"/>
<dbReference type="PDBsum" id="5VZC"/>
<dbReference type="PDBsum" id="5VZD"/>
<dbReference type="PDBsum" id="5VZE"/>
<dbReference type="PDBsum" id="5VZF"/>
<dbReference type="PDBsum" id="5VZG"/>
<dbReference type="PDBsum" id="5VZH"/>
<dbReference type="PDBsum" id="5VZI"/>
<dbReference type="PDBsum" id="5W4F"/>
<dbReference type="PDBsum" id="5ZLC"/>
<dbReference type="PDBsum" id="6AEC"/>
<dbReference type="PDBsum" id="6AEH"/>
<dbReference type="PDBsum" id="6AK5"/>
<dbReference type="PDBsum" id="6AK6"/>
<dbReference type="PDBsum" id="6AK8"/>
<dbReference type="PDBsum" id="6AK9"/>
<dbReference type="PDBsum" id="6AKH"/>
<dbReference type="PDBsum" id="6IPD"/>
<dbReference type="PDBsum" id="6IPE"/>
<dbReference type="PDBsum" id="6IPF"/>
<dbReference type="PDBsum" id="6IPG"/>
<dbReference type="PDBsum" id="6IPH"/>
<dbReference type="PDBsum" id="6IPI"/>
<dbReference type="PDBsum" id="6IPJ"/>
<dbReference type="PDBsum" id="6IPK"/>
<dbReference type="PDBsum" id="6IPL"/>
<dbReference type="PDBsum" id="6IPM"/>
<dbReference type="PDBsum" id="6IPN"/>
<dbReference type="PDBsum" id="6P1M"/>
<dbReference type="PDBsum" id="6P1N"/>
<dbReference type="PDBsum" id="6P1O"/>
<dbReference type="PDBsum" id="6P1P"/>
<dbReference type="PDBsum" id="6P1Q"/>
<dbReference type="PDBsum" id="6P1R"/>
<dbReference type="PDBsum" id="6P1S"/>
<dbReference type="PDBsum" id="6P1T"/>
<dbReference type="PDBsum" id="6P1U"/>
<dbReference type="PDBsum" id="6P1V"/>
<dbReference type="PDBsum" id="6P1W"/>
<dbReference type="PDBsum" id="6VEZ"/>
<dbReference type="PDBsum" id="6VF0"/>
<dbReference type="PDBsum" id="6VF1"/>
<dbReference type="PDBsum" id="6VF2"/>
<dbReference type="PDBsum" id="6VF3"/>
<dbReference type="PDBsum" id="6VF4"/>
<dbReference type="PDBsum" id="6VF5"/>
<dbReference type="PDBsum" id="6VF6"/>
<dbReference type="PDBsum" id="6VF7"/>
<dbReference type="PDBsum" id="6VF8"/>
<dbReference type="PDBsum" id="6VF9"/>
<dbReference type="PDBsum" id="6VFA"/>
<dbReference type="PDBsum" id="6VFB"/>
<dbReference type="PDBsum" id="6VFC"/>
<dbReference type="PDBsum" id="6WIC"/>
<dbReference type="PDBsum" id="6WID"/>
<dbReference type="PDBsum" id="6WIE"/>
<dbReference type="PDBsum" id="7CO6"/>
<dbReference type="PDBsum" id="7CO8"/>
<dbReference type="PDBsum" id="7CO9"/>
<dbReference type="PDBsum" id="7COA"/>
<dbReference type="PDBsum" id="7COB"/>
<dbReference type="PDBsum" id="7COC"/>
<dbReference type="PDBsum" id="7COD"/>
<dbReference type="PDBsum" id="7KSS"/>
<dbReference type="PDBsum" id="7KST"/>
<dbReference type="PDBsum" id="7KSU"/>
<dbReference type="PDBsum" id="7KSV"/>
<dbReference type="PDBsum" id="7KSW"/>
<dbReference type="PDBsum" id="7KSX"/>
<dbReference type="PDBsum" id="7KSY"/>
<dbReference type="PDBsum" id="7KSZ"/>
<dbReference type="PDBsum" id="7KT0"/>
<dbReference type="PDBsum" id="7KT1"/>
<dbReference type="PDBsum" id="7KT2"/>
<dbReference type="PDBsum" id="7KT3"/>
<dbReference type="PDBsum" id="7KT4"/>
<dbReference type="PDBsum" id="7KT5"/>
<dbReference type="PDBsum" id="7KT6"/>
<dbReference type="PDBsum" id="7KT7"/>
<dbReference type="PDBsum" id="7KT8"/>
<dbReference type="PDBsum" id="7KT9"/>
<dbReference type="PDBsum" id="7KTA"/>
<dbReference type="PDBsum" id="7KTB"/>
<dbReference type="PDBsum" id="7KTC"/>
<dbReference type="PDBsum" id="7KTD"/>
<dbReference type="PDBsum" id="7KTE"/>
<dbReference type="PDBsum" id="7KTF"/>
<dbReference type="PDBsum" id="7KTG"/>
<dbReference type="PDBsum" id="7KTH"/>
<dbReference type="PDBsum" id="7KTI"/>
<dbReference type="PDBsum" id="7KTJ"/>
<dbReference type="PDBsum" id="7KTK"/>
<dbReference type="PDBsum" id="7KTL"/>
<dbReference type="PDBsum" id="7KTM"/>
<dbReference type="PDBsum" id="7KTN"/>
<dbReference type="BMRB" id="Q9NP87"/>
<dbReference type="SMR" id="Q9NP87"/>
<dbReference type="BioGRID" id="118168">
    <property type="interactions" value="26"/>
</dbReference>
<dbReference type="ELM" id="Q9NP87"/>
<dbReference type="FunCoup" id="Q9NP87">
    <property type="interactions" value="1122"/>
</dbReference>
<dbReference type="IntAct" id="Q9NP87">
    <property type="interactions" value="9"/>
</dbReference>
<dbReference type="MINT" id="Q9NP87"/>
<dbReference type="STRING" id="9606.ENSP00000379174"/>
<dbReference type="BindingDB" id="Q9NP87"/>
<dbReference type="ChEMBL" id="CHEMBL1914260"/>
<dbReference type="GlyGen" id="Q9NP87">
    <property type="glycosylation" value="1 site"/>
</dbReference>
<dbReference type="iPTMnet" id="Q9NP87"/>
<dbReference type="PhosphoSitePlus" id="Q9NP87"/>
<dbReference type="BioMuta" id="POLM"/>
<dbReference type="DMDM" id="17366980"/>
<dbReference type="jPOST" id="Q9NP87"/>
<dbReference type="MassIVE" id="Q9NP87"/>
<dbReference type="PeptideAtlas" id="Q9NP87"/>
<dbReference type="ProteomicsDB" id="67013"/>
<dbReference type="ProteomicsDB" id="70190"/>
<dbReference type="ProteomicsDB" id="81932">
    <molecule id="Q9NP87-1"/>
</dbReference>
<dbReference type="Pumba" id="Q9NP87"/>
<dbReference type="Antibodypedia" id="13228">
    <property type="antibodies" value="142 antibodies from 30 providers"/>
</dbReference>
<dbReference type="DNASU" id="27434"/>
<dbReference type="Ensembl" id="ENST00000242248.10">
    <molecule id="Q9NP87-1"/>
    <property type="protein sequence ID" value="ENSP00000242248.5"/>
    <property type="gene ID" value="ENSG00000122678.17"/>
</dbReference>
<dbReference type="Ensembl" id="ENST00000335195.10">
    <molecule id="Q9NP87-2"/>
    <property type="protein sequence ID" value="ENSP00000335141.6"/>
    <property type="gene ID" value="ENSG00000122678.17"/>
</dbReference>
<dbReference type="Ensembl" id="ENST00000395831.7">
    <molecule id="Q9NP87-3"/>
    <property type="protein sequence ID" value="ENSP00000379174.3"/>
    <property type="gene ID" value="ENSG00000122678.17"/>
</dbReference>
<dbReference type="GeneID" id="27434"/>
<dbReference type="KEGG" id="hsa:27434"/>
<dbReference type="MANE-Select" id="ENST00000242248.10">
    <property type="protein sequence ID" value="ENSP00000242248.5"/>
    <property type="RefSeq nucleotide sequence ID" value="NM_013284.4"/>
    <property type="RefSeq protein sequence ID" value="NP_037416.1"/>
</dbReference>
<dbReference type="UCSC" id="uc003tjt.5">
    <molecule id="Q9NP87-1"/>
    <property type="organism name" value="human"/>
</dbReference>
<dbReference type="AGR" id="HGNC:9185"/>
<dbReference type="CTD" id="27434"/>
<dbReference type="DisGeNET" id="27434"/>
<dbReference type="GeneCards" id="POLM"/>
<dbReference type="HGNC" id="HGNC:9185">
    <property type="gene designation" value="POLM"/>
</dbReference>
<dbReference type="HPA" id="ENSG00000122678">
    <property type="expression patterns" value="Low tissue specificity"/>
</dbReference>
<dbReference type="MIM" id="606344">
    <property type="type" value="gene"/>
</dbReference>
<dbReference type="neXtProt" id="NX_Q9NP87"/>
<dbReference type="OpenTargets" id="ENSG00000122678"/>
<dbReference type="PharmGKB" id="PA33505"/>
<dbReference type="VEuPathDB" id="HostDB:ENSG00000122678"/>
<dbReference type="eggNOG" id="KOG2534">
    <property type="taxonomic scope" value="Eukaryota"/>
</dbReference>
<dbReference type="GeneTree" id="ENSGT00940000158490"/>
<dbReference type="HOGENOM" id="CLU_008698_0_1_1"/>
<dbReference type="InParanoid" id="Q9NP87"/>
<dbReference type="OMA" id="GKPCGHD"/>
<dbReference type="OrthoDB" id="205514at2759"/>
<dbReference type="PAN-GO" id="Q9NP87">
    <property type="GO annotations" value="3 GO annotations based on evolutionary models"/>
</dbReference>
<dbReference type="PhylomeDB" id="Q9NP87"/>
<dbReference type="TreeFam" id="TF103012"/>
<dbReference type="BRENDA" id="2.7.7.7">
    <property type="organism ID" value="2681"/>
</dbReference>
<dbReference type="PathwayCommons" id="Q9NP87"/>
<dbReference type="Reactome" id="R-HSA-5693571">
    <property type="pathway name" value="Nonhomologous End-Joining (NHEJ)"/>
</dbReference>
<dbReference type="SignaLink" id="Q9NP87"/>
<dbReference type="SIGNOR" id="Q9NP87"/>
<dbReference type="BioGRID-ORCS" id="27434">
    <property type="hits" value="18 hits in 1161 CRISPR screens"/>
</dbReference>
<dbReference type="EvolutionaryTrace" id="Q9NP87"/>
<dbReference type="GeneWiki" id="DNA_polymerase_mu"/>
<dbReference type="GenomeRNAi" id="27434"/>
<dbReference type="Pharos" id="Q9NP87">
    <property type="development level" value="Tbio"/>
</dbReference>
<dbReference type="PRO" id="PR:Q9NP87"/>
<dbReference type="Proteomes" id="UP000005640">
    <property type="component" value="Chromosome 7"/>
</dbReference>
<dbReference type="RNAct" id="Q9NP87">
    <property type="molecule type" value="protein"/>
</dbReference>
<dbReference type="Bgee" id="ENSG00000122678">
    <property type="expression patterns" value="Expressed in granulocyte and 93 other cell types or tissues"/>
</dbReference>
<dbReference type="ExpressionAtlas" id="Q9NP87">
    <property type="expression patterns" value="baseline and differential"/>
</dbReference>
<dbReference type="GO" id="GO:0005654">
    <property type="term" value="C:nucleoplasm"/>
    <property type="evidence" value="ECO:0000304"/>
    <property type="project" value="Reactome"/>
</dbReference>
<dbReference type="GO" id="GO:0005634">
    <property type="term" value="C:nucleus"/>
    <property type="evidence" value="ECO:0000318"/>
    <property type="project" value="GO_Central"/>
</dbReference>
<dbReference type="GO" id="GO:0003677">
    <property type="term" value="F:DNA binding"/>
    <property type="evidence" value="ECO:0007669"/>
    <property type="project" value="InterPro"/>
</dbReference>
<dbReference type="GO" id="GO:0003887">
    <property type="term" value="F:DNA-directed DNA polymerase activity"/>
    <property type="evidence" value="ECO:0000318"/>
    <property type="project" value="GO_Central"/>
</dbReference>
<dbReference type="GO" id="GO:0046872">
    <property type="term" value="F:metal ion binding"/>
    <property type="evidence" value="ECO:0007669"/>
    <property type="project" value="UniProtKB-KW"/>
</dbReference>
<dbReference type="GO" id="GO:0030183">
    <property type="term" value="P:B cell differentiation"/>
    <property type="evidence" value="ECO:0007669"/>
    <property type="project" value="Ensembl"/>
</dbReference>
<dbReference type="GO" id="GO:0006310">
    <property type="term" value="P:DNA recombination"/>
    <property type="evidence" value="ECO:0007669"/>
    <property type="project" value="UniProtKB-KW"/>
</dbReference>
<dbReference type="GO" id="GO:0006303">
    <property type="term" value="P:double-strand break repair via nonhomologous end joining"/>
    <property type="evidence" value="ECO:0000318"/>
    <property type="project" value="GO_Central"/>
</dbReference>
<dbReference type="GO" id="GO:0016446">
    <property type="term" value="P:somatic hypermutation of immunoglobulin genes"/>
    <property type="evidence" value="ECO:0007669"/>
    <property type="project" value="Ensembl"/>
</dbReference>
<dbReference type="CDD" id="cd18442">
    <property type="entry name" value="BRCT_polymerase_mu"/>
    <property type="match status" value="1"/>
</dbReference>
<dbReference type="CDD" id="cd00141">
    <property type="entry name" value="NT_POLXc"/>
    <property type="match status" value="1"/>
</dbReference>
<dbReference type="FunFam" id="1.10.150.20:FF:000010">
    <property type="entry name" value="DNA polymerase lambda"/>
    <property type="match status" value="1"/>
</dbReference>
<dbReference type="FunFam" id="1.10.150.110:FF:000003">
    <property type="entry name" value="DNA polymerase mu"/>
    <property type="match status" value="1"/>
</dbReference>
<dbReference type="FunFam" id="3.30.210.10:FF:000004">
    <property type="entry name" value="DNA-directed DNA/RNA polymerase mu"/>
    <property type="match status" value="1"/>
</dbReference>
<dbReference type="FunFam" id="3.30.460.10:FF:000032">
    <property type="entry name" value="DNA-directed DNA/RNA polymerase mu"/>
    <property type="match status" value="1"/>
</dbReference>
<dbReference type="FunFam" id="3.40.50.10190:FF:000035">
    <property type="entry name" value="DNA-directed DNA/RNA polymerase mu"/>
    <property type="match status" value="1"/>
</dbReference>
<dbReference type="Gene3D" id="1.10.150.20">
    <property type="entry name" value="5' to 3' exonuclease, C-terminal subdomain"/>
    <property type="match status" value="1"/>
</dbReference>
<dbReference type="Gene3D" id="3.30.460.10">
    <property type="entry name" value="Beta Polymerase, domain 2"/>
    <property type="match status" value="1"/>
</dbReference>
<dbReference type="Gene3D" id="3.40.50.10190">
    <property type="entry name" value="BRCT domain"/>
    <property type="match status" value="1"/>
</dbReference>
<dbReference type="Gene3D" id="1.10.150.110">
    <property type="entry name" value="DNA polymerase beta, N-terminal domain-like"/>
    <property type="match status" value="1"/>
</dbReference>
<dbReference type="Gene3D" id="3.30.210.10">
    <property type="entry name" value="DNA polymerase, thumb domain"/>
    <property type="match status" value="1"/>
</dbReference>
<dbReference type="InterPro" id="IPR001357">
    <property type="entry name" value="BRCT_dom"/>
</dbReference>
<dbReference type="InterPro" id="IPR036420">
    <property type="entry name" value="BRCT_dom_sf"/>
</dbReference>
<dbReference type="InterPro" id="IPR002054">
    <property type="entry name" value="DNA-dir_DNA_pol_X"/>
</dbReference>
<dbReference type="InterPro" id="IPR027249">
    <property type="entry name" value="DNA/RNApol_mu"/>
</dbReference>
<dbReference type="InterPro" id="IPR019843">
    <property type="entry name" value="DNA_pol-X_BS"/>
</dbReference>
<dbReference type="InterPro" id="IPR010996">
    <property type="entry name" value="DNA_pol_b-like_N"/>
</dbReference>
<dbReference type="InterPro" id="IPR028207">
    <property type="entry name" value="DNA_pol_B_palm_palm"/>
</dbReference>
<dbReference type="InterPro" id="IPR018944">
    <property type="entry name" value="DNA_pol_lambd_fingers_domain"/>
</dbReference>
<dbReference type="InterPro" id="IPR027421">
    <property type="entry name" value="DNA_pol_lamdba_lyase_dom_sf"/>
</dbReference>
<dbReference type="InterPro" id="IPR037160">
    <property type="entry name" value="DNA_Pol_thumb_sf"/>
</dbReference>
<dbReference type="InterPro" id="IPR022312">
    <property type="entry name" value="DNA_pol_X"/>
</dbReference>
<dbReference type="InterPro" id="IPR043519">
    <property type="entry name" value="NT_sf"/>
</dbReference>
<dbReference type="InterPro" id="IPR029398">
    <property type="entry name" value="PolB_thumb"/>
</dbReference>
<dbReference type="InterPro" id="IPR001726">
    <property type="entry name" value="TdT/Mu"/>
</dbReference>
<dbReference type="PANTHER" id="PTHR11276">
    <property type="entry name" value="DNA POLYMERASE TYPE-X FAMILY MEMBER"/>
    <property type="match status" value="1"/>
</dbReference>
<dbReference type="PANTHER" id="PTHR11276:SF24">
    <property type="entry name" value="DNA-DIRECTED DNA_RNA POLYMERASE MU"/>
    <property type="match status" value="1"/>
</dbReference>
<dbReference type="Pfam" id="PF14792">
    <property type="entry name" value="DNA_pol_B_palm"/>
    <property type="match status" value="1"/>
</dbReference>
<dbReference type="Pfam" id="PF14791">
    <property type="entry name" value="DNA_pol_B_thumb"/>
    <property type="match status" value="1"/>
</dbReference>
<dbReference type="Pfam" id="PF10391">
    <property type="entry name" value="DNA_pol_lambd_f"/>
    <property type="match status" value="1"/>
</dbReference>
<dbReference type="Pfam" id="PF14716">
    <property type="entry name" value="HHH_8"/>
    <property type="match status" value="1"/>
</dbReference>
<dbReference type="PIRSF" id="PIRSF000817">
    <property type="entry name" value="DNA_NT"/>
    <property type="match status" value="1"/>
</dbReference>
<dbReference type="PIRSF" id="PIRSF501176">
    <property type="entry name" value="DNApol_mu"/>
    <property type="match status" value="1"/>
</dbReference>
<dbReference type="PRINTS" id="PR00869">
    <property type="entry name" value="DNAPOLX"/>
</dbReference>
<dbReference type="PRINTS" id="PR00871">
    <property type="entry name" value="DNAPOLXTDT"/>
</dbReference>
<dbReference type="SMART" id="SM00483">
    <property type="entry name" value="POLXc"/>
    <property type="match status" value="1"/>
</dbReference>
<dbReference type="SUPFAM" id="SSF52113">
    <property type="entry name" value="BRCT domain"/>
    <property type="match status" value="1"/>
</dbReference>
<dbReference type="SUPFAM" id="SSF47802">
    <property type="entry name" value="DNA polymerase beta, N-terminal domain-like"/>
    <property type="match status" value="1"/>
</dbReference>
<dbReference type="SUPFAM" id="SSF81301">
    <property type="entry name" value="Nucleotidyltransferase"/>
    <property type="match status" value="1"/>
</dbReference>
<dbReference type="SUPFAM" id="SSF81585">
    <property type="entry name" value="PsbU/PolX domain-like"/>
    <property type="match status" value="1"/>
</dbReference>
<dbReference type="PROSITE" id="PS50172">
    <property type="entry name" value="BRCT"/>
    <property type="match status" value="1"/>
</dbReference>
<dbReference type="PROSITE" id="PS00522">
    <property type="entry name" value="DNA_POLYMERASE_X"/>
    <property type="match status" value="1"/>
</dbReference>
<feature type="chain" id="PRO_0000218787" description="DNA-directed DNA/RNA polymerase mu">
    <location>
        <begin position="1"/>
        <end position="494"/>
    </location>
</feature>
<feature type="domain" description="BRCT" evidence="2">
    <location>
        <begin position="22"/>
        <end position="122"/>
    </location>
</feature>
<feature type="region of interest" description="Disordered" evidence="3">
    <location>
        <begin position="1"/>
        <end position="24"/>
    </location>
</feature>
<feature type="region of interest" description="Involved in ssDNA binding" evidence="1">
    <location>
        <begin position="323"/>
        <end position="332"/>
    </location>
</feature>
<feature type="binding site" evidence="1">
    <location>
        <position position="330"/>
    </location>
    <ligand>
        <name>Mg(2+)</name>
        <dbReference type="ChEBI" id="CHEBI:18420"/>
    </ligand>
</feature>
<feature type="binding site" evidence="1">
    <location>
        <position position="332"/>
    </location>
    <ligand>
        <name>Mg(2+)</name>
        <dbReference type="ChEBI" id="CHEBI:18420"/>
    </ligand>
</feature>
<feature type="binding site" evidence="1">
    <location>
        <position position="418"/>
    </location>
    <ligand>
        <name>Mg(2+)</name>
        <dbReference type="ChEBI" id="CHEBI:18420"/>
    </ligand>
</feature>
<feature type="site" description="Responsible for the low discrimination between dNTP and rNTP">
    <location>
        <position position="433"/>
    </location>
</feature>
<feature type="modified residue" description="Phosphoserine" evidence="11 12 13 14">
    <location>
        <position position="12"/>
    </location>
</feature>
<feature type="splice variant" id="VSP_055288" description="In isoform 3." evidence="9">
    <original>YQTMKLFTQIFGVGVKTADRWYREGLRTLDDLREQPQKLTQQQ</original>
    <variation>APAPPGPEHPSPAVRCRCPAAGGGGSCGAGPAWGHRHADRRLP</variation>
    <location>
        <begin position="234"/>
        <end position="276"/>
    </location>
</feature>
<feature type="splice variant" id="VSP_055289" description="In isoform 3." evidence="9">
    <location>
        <begin position="277"/>
        <end position="356"/>
    </location>
</feature>
<feature type="splice variant" id="VSP_055290" description="In isoform 2." evidence="9">
    <original>GLQHHQDLSTPVLRSDVDALQQVVEEAVGQALPGATVTLTGGFRRGKLQGHDVDFLITHPKEGQEAGLLPRVMCRLQD</original>
    <variation>APPGPEHPSPAVRCRCPAAGGGGSCGAGPAWGHRHADRRLP</variation>
    <location>
        <begin position="279"/>
        <end position="356"/>
    </location>
</feature>
<feature type="splice variant" id="VSP_055291" description="In isoform 3." evidence="9">
    <original>KTFFQAASEEDIFRHLGLEYLPPEQRNA</original>
    <variation>GSSSGKTPRSRKSCFCCRRHFSKRLQRKTSSDTWALSTFLQSRETPEPACVPHFHSGNWAAPNLATECLQADMLPPDPHLHPSPPRPGSSGGQLCLQDQLSPCWCAAGCDEVGALSASLITV</variation>
    <location>
        <begin position="467"/>
        <end position="494"/>
    </location>
</feature>
<feature type="sequence variant" id="VAR_022287" description="In dbSNP:rs28382635." evidence="8">
    <original>E</original>
    <variation>D</variation>
    <location>
        <position position="107"/>
    </location>
</feature>
<feature type="sequence variant" id="VAR_022288" description="In dbSNP:rs28382644." evidence="8">
    <original>G</original>
    <variation>A</variation>
    <location>
        <position position="220"/>
    </location>
</feature>
<feature type="sequence variant" id="VAR_022289" description="In dbSNP:rs28382653." evidence="8">
    <original>V</original>
    <variation>F</variation>
    <location>
        <position position="246"/>
    </location>
</feature>
<feature type="sequence variant" id="VAR_022290" description="In dbSNP:rs28382661." evidence="8">
    <original>L</original>
    <variation>F</variation>
    <location>
        <position position="484"/>
    </location>
</feature>
<feature type="strand" evidence="15">
    <location>
        <begin position="26"/>
        <end position="34"/>
    </location>
</feature>
<feature type="helix" evidence="15">
    <location>
        <begin position="36"/>
        <end position="39"/>
    </location>
</feature>
<feature type="helix" evidence="15">
    <location>
        <begin position="42"/>
        <end position="54"/>
    </location>
</feature>
<feature type="strand" evidence="15">
    <location>
        <begin position="55"/>
        <end position="58"/>
    </location>
</feature>
<feature type="strand" evidence="15">
    <location>
        <begin position="68"/>
        <end position="73"/>
    </location>
</feature>
<feature type="helix" evidence="15">
    <location>
        <begin position="76"/>
        <end position="89"/>
    </location>
</feature>
<feature type="strand" evidence="15">
    <location>
        <begin position="98"/>
        <end position="101"/>
    </location>
</feature>
<feature type="helix" evidence="15">
    <location>
        <begin position="102"/>
        <end position="111"/>
    </location>
</feature>
<feature type="turn" evidence="15">
    <location>
        <begin position="119"/>
        <end position="121"/>
    </location>
</feature>
<feature type="helix" evidence="18">
    <location>
        <begin position="142"/>
        <end position="144"/>
    </location>
</feature>
<feature type="helix" evidence="18">
    <location>
        <begin position="154"/>
        <end position="169"/>
    </location>
</feature>
<feature type="helix" evidence="18">
    <location>
        <begin position="173"/>
        <end position="187"/>
    </location>
</feature>
<feature type="strand" evidence="17">
    <location>
        <begin position="189"/>
        <end position="191"/>
    </location>
</feature>
<feature type="helix" evidence="18">
    <location>
        <begin position="196"/>
        <end position="199"/>
    </location>
</feature>
<feature type="helix" evidence="18">
    <location>
        <begin position="207"/>
        <end position="219"/>
    </location>
</feature>
<feature type="helix" evidence="18">
    <location>
        <begin position="223"/>
        <end position="229"/>
    </location>
</feature>
<feature type="helix" evidence="18">
    <location>
        <begin position="232"/>
        <end position="241"/>
    </location>
</feature>
<feature type="helix" evidence="18">
    <location>
        <begin position="248"/>
        <end position="256"/>
    </location>
</feature>
<feature type="helix" evidence="18">
    <location>
        <begin position="262"/>
        <end position="266"/>
    </location>
</feature>
<feature type="helix" evidence="18">
    <location>
        <begin position="269"/>
        <end position="271"/>
    </location>
</feature>
<feature type="helix" evidence="18">
    <location>
        <begin position="274"/>
        <end position="281"/>
    </location>
</feature>
<feature type="helix" evidence="18">
    <location>
        <begin position="283"/>
        <end position="286"/>
    </location>
</feature>
<feature type="helix" evidence="18">
    <location>
        <begin position="292"/>
        <end position="309"/>
    </location>
</feature>
<feature type="strand" evidence="18">
    <location>
        <begin position="314"/>
        <end position="317"/>
    </location>
</feature>
<feature type="helix" evidence="18">
    <location>
        <begin position="319"/>
        <end position="322"/>
    </location>
</feature>
<feature type="strand" evidence="18">
    <location>
        <begin position="326"/>
        <end position="329"/>
    </location>
</feature>
<feature type="strand" evidence="18">
    <location>
        <begin position="331"/>
        <end position="336"/>
    </location>
</feature>
<feature type="turn" evidence="18">
    <location>
        <begin position="340"/>
        <end position="345"/>
    </location>
</feature>
<feature type="helix" evidence="18">
    <location>
        <begin position="346"/>
        <end position="356"/>
    </location>
</feature>
<feature type="strand" evidence="18">
    <location>
        <begin position="360"/>
        <end position="362"/>
    </location>
</feature>
<feature type="turn" evidence="16">
    <location>
        <begin position="364"/>
        <end position="367"/>
    </location>
</feature>
<feature type="strand" evidence="18">
    <location>
        <begin position="387"/>
        <end position="396"/>
    </location>
</feature>
<feature type="strand" evidence="18">
    <location>
        <begin position="411"/>
        <end position="421"/>
    </location>
</feature>
<feature type="helix" evidence="18">
    <location>
        <begin position="424"/>
        <end position="426"/>
    </location>
</feature>
<feature type="helix" evidence="18">
    <location>
        <begin position="427"/>
        <end position="435"/>
    </location>
</feature>
<feature type="helix" evidence="18">
    <location>
        <begin position="438"/>
        <end position="452"/>
    </location>
</feature>
<feature type="strand" evidence="18">
    <location>
        <begin position="455"/>
        <end position="457"/>
    </location>
</feature>
<feature type="strand" evidence="18">
    <location>
        <begin position="460"/>
        <end position="463"/>
    </location>
</feature>
<feature type="turn" evidence="18">
    <location>
        <begin position="464"/>
        <end position="467"/>
    </location>
</feature>
<feature type="helix" evidence="18">
    <location>
        <begin position="475"/>
        <end position="481"/>
    </location>
</feature>
<feature type="helix" evidence="18">
    <location>
        <begin position="489"/>
        <end position="491"/>
    </location>
</feature>
<sequence length="494" mass="54816">MLPKRRRARVGSPSGDAASSTPPSTRFPGVAIYLVEPRMGRSRRAFLTGLARSKGFRVLDACSSEATHVVMEETSAEEAVSWQERRMAAAPPGCTPPALLDISWLTESLGAGQPVPVECRHRLEVAGPRKGPLSPAWMPAYACQRPTPLTHHNTGLSEALEILAEAAGFEGSEGRLLTFCRAASVLKALPSPVTTLSQLQGLPHFGEHSSRVVQELLEHGVCEEVERVRRSERYQTMKLFTQIFGVGVKTADRWYREGLRTLDDLREQPQKLTQQQKAGLQHHQDLSTPVLRSDVDALQQVVEEAVGQALPGATVTLTGGFRRGKLQGHDVDFLITHPKEGQEAGLLPRVMCRLQDQGLILYHQHQHSCCESPTRLAQQSHMDAFERSFCIFRLPQPPGAAVGGSTRPCPSWKAVRVDLVVAPVSQFPFALLGWTGSKLFQRELRRFSRKEKGLWLNSHGLFDPEQKTFFQAASEEDIFRHLGLEYLPPEQRNA</sequence>
<accession>Q9NP87</accession>
<accession>D3DVK4</accession>
<accession>Q6P5X8</accession>
<accession>Q86WQ9</accession>
<comment type="function">
    <text evidence="4 5 6 7">Gap-filling polymerase involved in repair of DNA double-strand breaks by non-homologous end joining (NHEJ). Participates in immunoglobulin (Ig) light chain gene rearrangement in V(D)J recombination.</text>
</comment>
<comment type="catalytic activity">
    <reaction>
        <text>DNA(n) + a 2'-deoxyribonucleoside 5'-triphosphate = DNA(n+1) + diphosphate</text>
        <dbReference type="Rhea" id="RHEA:22508"/>
        <dbReference type="Rhea" id="RHEA-COMP:17339"/>
        <dbReference type="Rhea" id="RHEA-COMP:17340"/>
        <dbReference type="ChEBI" id="CHEBI:33019"/>
        <dbReference type="ChEBI" id="CHEBI:61560"/>
        <dbReference type="ChEBI" id="CHEBI:173112"/>
        <dbReference type="EC" id="2.7.7.7"/>
    </reaction>
</comment>
<comment type="cofactor">
    <cofactor evidence="1">
        <name>Mg(2+)</name>
        <dbReference type="ChEBI" id="CHEBI:18420"/>
    </cofactor>
</comment>
<comment type="interaction">
    <interactant intactId="EBI-9675790">
        <id>Q9NP87</id>
    </interactant>
    <interactant intactId="EBI-9675698">
        <id>P14079</id>
        <label>tax</label>
    </interactant>
    <organismsDiffer>true</organismsDiffer>
    <experiments>3</experiments>
</comment>
<comment type="subcellular location">
    <subcellularLocation>
        <location evidence="1">Nucleus</location>
    </subcellularLocation>
</comment>
<comment type="alternative products">
    <event type="alternative splicing"/>
    <isoform>
        <id>Q9NP87-1</id>
        <name>1</name>
        <sequence type="displayed"/>
    </isoform>
    <isoform>
        <id>Q9NP87-2</id>
        <name>2</name>
        <sequence type="described" ref="VSP_055290"/>
    </isoform>
    <isoform>
        <id>Q9NP87-3</id>
        <name>3</name>
        <sequence type="described" ref="VSP_055288 VSP_055289 VSP_055291"/>
    </isoform>
</comment>
<comment type="tissue specificity">
    <text>Expressed in a number of tissues. Abundant in thymus.</text>
</comment>
<comment type="miscellaneous">
    <text>DPOLM has a reduced ability to distinguish dNTP and rNTP as substrates, and elongates them on DNA primer strand with a similar efficiency. It is able to polymerize nucleotides on RNA primer strands.</text>
</comment>
<comment type="similarity">
    <text evidence="10">Belongs to the DNA polymerase type-X family.</text>
</comment>
<name>DPOLM_HUMAN</name>